<sequence length="832" mass="88755">MLMSDVEKFGGDCGSSGGSGRPTLKLGTRASTLAKTPTSTGGRTFMTVEVRSRKRKASGASPAEGVGYGTSPYTSDDNRQGQISRSATCSLTAREQLSRINAIHTADSISAQKEAAKKLRDEEEVEVAPPEGESVIDEPDSVKEPAAAADAVADVATPVLGDIAPGAAGTRPGRGGHDDKGKRYSYQGAGGKIKEKEGGGGVKKAAASRASSKHIKLDIENALSGTEERYVLMASSRRRGGSKSDRRISRDVVIPDEIEVKALAAAMAEKVGDVLRVLSHMGVEARQNTAIGSDVASEVAERFSHRPKVVSKIQMERELSDISDSGLALEPRPPVVTVMGHVDHGKTSLLDVLRKSNVAEKEFRGITQHIGAYQIDVDGKKITFLDTPGHEAFSDMRARGTNVTDIVVLVVAADDGVMPQTVESINHVKTAGVSMVVAVNKIDRSDANVDKITNDLLQHGVVPEKLGGDVMIVPVSAKTGENLDKLKSSILLLAEMLELRAPVEGRAQGVVIESKIERNCGVVATVIVQRGTLRKGNVVVAGDGSYGKVRNMFDDSDNSVEEALPSMPVRVLGLDKVPKAGDVFLVMPSEKHARDLLEHRAGINLSRGRDSGRNDSVFTGPLFSMDRPEGVNMILKADVAGSLEAISRSVAQIEHEEVKFNILHKDIGDVTKSDILLAEAASAVVLAFNVKVDAQARDLVRQKDVDIRHHRVIYDLIDDVKGVVCGKLKPIIREVQVGLLVVREVFSSGKGGTVIGCYVSEGAVSRGALVKIYRNDAVTCEGKVKVLRRFKDDVKEVGHGLECGVLVEGAKDVAVGDVIKVLEVVEHARVVE</sequence>
<gene>
    <name evidence="2" type="primary">infB</name>
    <name type="ordered locus">AM735</name>
</gene>
<name>IF2_ANAMM</name>
<proteinExistence type="inferred from homology"/>
<dbReference type="EMBL" id="CP000030">
    <property type="protein sequence ID" value="AAV86685.1"/>
    <property type="molecule type" value="Genomic_DNA"/>
</dbReference>
<dbReference type="SMR" id="Q5PAJ5"/>
<dbReference type="KEGG" id="ama:AM735"/>
<dbReference type="HOGENOM" id="CLU_006301_10_2_5"/>
<dbReference type="GO" id="GO:0005737">
    <property type="term" value="C:cytoplasm"/>
    <property type="evidence" value="ECO:0007669"/>
    <property type="project" value="UniProtKB-SubCell"/>
</dbReference>
<dbReference type="GO" id="GO:0005525">
    <property type="term" value="F:GTP binding"/>
    <property type="evidence" value="ECO:0007669"/>
    <property type="project" value="UniProtKB-KW"/>
</dbReference>
<dbReference type="GO" id="GO:0003924">
    <property type="term" value="F:GTPase activity"/>
    <property type="evidence" value="ECO:0007669"/>
    <property type="project" value="UniProtKB-UniRule"/>
</dbReference>
<dbReference type="GO" id="GO:0003743">
    <property type="term" value="F:translation initiation factor activity"/>
    <property type="evidence" value="ECO:0007669"/>
    <property type="project" value="UniProtKB-UniRule"/>
</dbReference>
<dbReference type="CDD" id="cd01887">
    <property type="entry name" value="IF2_eIF5B"/>
    <property type="match status" value="1"/>
</dbReference>
<dbReference type="CDD" id="cd03702">
    <property type="entry name" value="IF2_mtIF2_II"/>
    <property type="match status" value="1"/>
</dbReference>
<dbReference type="CDD" id="cd03692">
    <property type="entry name" value="mtIF2_IVc"/>
    <property type="match status" value="1"/>
</dbReference>
<dbReference type="FunFam" id="2.40.30.10:FF:000008">
    <property type="entry name" value="Translation initiation factor IF-2"/>
    <property type="match status" value="1"/>
</dbReference>
<dbReference type="FunFam" id="2.40.30.10:FF:000054">
    <property type="entry name" value="Translation initiation factor IF-2"/>
    <property type="match status" value="1"/>
</dbReference>
<dbReference type="FunFam" id="3.40.50.10050:FF:000001">
    <property type="entry name" value="Translation initiation factor IF-2"/>
    <property type="match status" value="1"/>
</dbReference>
<dbReference type="FunFam" id="3.40.50.300:FF:000019">
    <property type="entry name" value="Translation initiation factor IF-2"/>
    <property type="match status" value="1"/>
</dbReference>
<dbReference type="Gene3D" id="3.40.50.300">
    <property type="entry name" value="P-loop containing nucleotide triphosphate hydrolases"/>
    <property type="match status" value="1"/>
</dbReference>
<dbReference type="Gene3D" id="2.40.30.10">
    <property type="entry name" value="Translation factors"/>
    <property type="match status" value="2"/>
</dbReference>
<dbReference type="Gene3D" id="3.40.50.10050">
    <property type="entry name" value="Translation initiation factor IF- 2, domain 3"/>
    <property type="match status" value="1"/>
</dbReference>
<dbReference type="HAMAP" id="MF_00100_B">
    <property type="entry name" value="IF_2_B"/>
    <property type="match status" value="1"/>
</dbReference>
<dbReference type="InterPro" id="IPR053905">
    <property type="entry name" value="EF-G-like_DII"/>
</dbReference>
<dbReference type="InterPro" id="IPR044145">
    <property type="entry name" value="IF2_II"/>
</dbReference>
<dbReference type="InterPro" id="IPR027417">
    <property type="entry name" value="P-loop_NTPase"/>
</dbReference>
<dbReference type="InterPro" id="IPR005225">
    <property type="entry name" value="Small_GTP-bd"/>
</dbReference>
<dbReference type="InterPro" id="IPR000795">
    <property type="entry name" value="T_Tr_GTP-bd_dom"/>
</dbReference>
<dbReference type="InterPro" id="IPR000178">
    <property type="entry name" value="TF_IF2_bacterial-like"/>
</dbReference>
<dbReference type="InterPro" id="IPR015760">
    <property type="entry name" value="TIF_IF2"/>
</dbReference>
<dbReference type="InterPro" id="IPR023115">
    <property type="entry name" value="TIF_IF2_dom3"/>
</dbReference>
<dbReference type="InterPro" id="IPR036925">
    <property type="entry name" value="TIF_IF2_dom3_sf"/>
</dbReference>
<dbReference type="InterPro" id="IPR009000">
    <property type="entry name" value="Transl_B-barrel_sf"/>
</dbReference>
<dbReference type="NCBIfam" id="TIGR00487">
    <property type="entry name" value="IF-2"/>
    <property type="match status" value="1"/>
</dbReference>
<dbReference type="NCBIfam" id="TIGR00231">
    <property type="entry name" value="small_GTP"/>
    <property type="match status" value="1"/>
</dbReference>
<dbReference type="PANTHER" id="PTHR43381:SF5">
    <property type="entry name" value="TR-TYPE G DOMAIN-CONTAINING PROTEIN"/>
    <property type="match status" value="1"/>
</dbReference>
<dbReference type="PANTHER" id="PTHR43381">
    <property type="entry name" value="TRANSLATION INITIATION FACTOR IF-2-RELATED"/>
    <property type="match status" value="1"/>
</dbReference>
<dbReference type="Pfam" id="PF22042">
    <property type="entry name" value="EF-G_D2"/>
    <property type="match status" value="1"/>
</dbReference>
<dbReference type="Pfam" id="PF00009">
    <property type="entry name" value="GTP_EFTU"/>
    <property type="match status" value="1"/>
</dbReference>
<dbReference type="Pfam" id="PF11987">
    <property type="entry name" value="IF-2"/>
    <property type="match status" value="1"/>
</dbReference>
<dbReference type="SUPFAM" id="SSF52156">
    <property type="entry name" value="Initiation factor IF2/eIF5b, domain 3"/>
    <property type="match status" value="1"/>
</dbReference>
<dbReference type="SUPFAM" id="SSF52540">
    <property type="entry name" value="P-loop containing nucleoside triphosphate hydrolases"/>
    <property type="match status" value="1"/>
</dbReference>
<dbReference type="SUPFAM" id="SSF50447">
    <property type="entry name" value="Translation proteins"/>
    <property type="match status" value="2"/>
</dbReference>
<dbReference type="PROSITE" id="PS51722">
    <property type="entry name" value="G_TR_2"/>
    <property type="match status" value="1"/>
</dbReference>
<dbReference type="PROSITE" id="PS01176">
    <property type="entry name" value="IF2"/>
    <property type="match status" value="1"/>
</dbReference>
<feature type="chain" id="PRO_0000228161" description="Translation initiation factor IF-2">
    <location>
        <begin position="1"/>
        <end position="832"/>
    </location>
</feature>
<feature type="domain" description="tr-type G">
    <location>
        <begin position="331"/>
        <end position="500"/>
    </location>
</feature>
<feature type="region of interest" description="Disordered" evidence="3">
    <location>
        <begin position="1"/>
        <end position="87"/>
    </location>
</feature>
<feature type="region of interest" description="Disordered" evidence="3">
    <location>
        <begin position="120"/>
        <end position="148"/>
    </location>
</feature>
<feature type="region of interest" description="Disordered" evidence="3">
    <location>
        <begin position="163"/>
        <end position="201"/>
    </location>
</feature>
<feature type="region of interest" description="G1" evidence="1">
    <location>
        <begin position="340"/>
        <end position="347"/>
    </location>
</feature>
<feature type="region of interest" description="G2" evidence="1">
    <location>
        <begin position="365"/>
        <end position="369"/>
    </location>
</feature>
<feature type="region of interest" description="G3" evidence="1">
    <location>
        <begin position="386"/>
        <end position="389"/>
    </location>
</feature>
<feature type="region of interest" description="G4" evidence="1">
    <location>
        <begin position="440"/>
        <end position="443"/>
    </location>
</feature>
<feature type="region of interest" description="G5" evidence="1">
    <location>
        <begin position="476"/>
        <end position="478"/>
    </location>
</feature>
<feature type="compositionally biased region" description="Basic and acidic residues" evidence="3">
    <location>
        <begin position="1"/>
        <end position="10"/>
    </location>
</feature>
<feature type="compositionally biased region" description="Gly residues" evidence="3">
    <location>
        <begin position="11"/>
        <end position="20"/>
    </location>
</feature>
<feature type="compositionally biased region" description="Polar residues" evidence="3">
    <location>
        <begin position="29"/>
        <end position="42"/>
    </location>
</feature>
<feature type="compositionally biased region" description="Polar residues" evidence="3">
    <location>
        <begin position="71"/>
        <end position="87"/>
    </location>
</feature>
<feature type="binding site" evidence="2">
    <location>
        <begin position="340"/>
        <end position="347"/>
    </location>
    <ligand>
        <name>GTP</name>
        <dbReference type="ChEBI" id="CHEBI:37565"/>
    </ligand>
</feature>
<feature type="binding site" evidence="2">
    <location>
        <begin position="386"/>
        <end position="390"/>
    </location>
    <ligand>
        <name>GTP</name>
        <dbReference type="ChEBI" id="CHEBI:37565"/>
    </ligand>
</feature>
<feature type="binding site" evidence="2">
    <location>
        <begin position="440"/>
        <end position="443"/>
    </location>
    <ligand>
        <name>GTP</name>
        <dbReference type="ChEBI" id="CHEBI:37565"/>
    </ligand>
</feature>
<evidence type="ECO:0000250" key="1"/>
<evidence type="ECO:0000255" key="2">
    <source>
        <dbReference type="HAMAP-Rule" id="MF_00100"/>
    </source>
</evidence>
<evidence type="ECO:0000256" key="3">
    <source>
        <dbReference type="SAM" id="MobiDB-lite"/>
    </source>
</evidence>
<accession>Q5PAJ5</accession>
<protein>
    <recommendedName>
        <fullName evidence="2">Translation initiation factor IF-2</fullName>
    </recommendedName>
</protein>
<keyword id="KW-0963">Cytoplasm</keyword>
<keyword id="KW-0342">GTP-binding</keyword>
<keyword id="KW-0396">Initiation factor</keyword>
<keyword id="KW-0547">Nucleotide-binding</keyword>
<keyword id="KW-0648">Protein biosynthesis</keyword>
<reference key="1">
    <citation type="journal article" date="2005" name="Proc. Natl. Acad. Sci. U.S.A.">
        <title>Complete genome sequencing of Anaplasma marginale reveals that the surface is skewed to two superfamilies of outer membrane proteins.</title>
        <authorList>
            <person name="Brayton K.A."/>
            <person name="Kappmeyer L.S."/>
            <person name="Herndon D.R."/>
            <person name="Dark M.J."/>
            <person name="Tibbals D.L."/>
            <person name="Palmer G.H."/>
            <person name="McGuire T.C."/>
            <person name="Knowles D.P. Jr."/>
        </authorList>
    </citation>
    <scope>NUCLEOTIDE SEQUENCE [LARGE SCALE GENOMIC DNA]</scope>
    <source>
        <strain>St. Maries</strain>
    </source>
</reference>
<organism>
    <name type="scientific">Anaplasma marginale (strain St. Maries)</name>
    <dbReference type="NCBI Taxonomy" id="234826"/>
    <lineage>
        <taxon>Bacteria</taxon>
        <taxon>Pseudomonadati</taxon>
        <taxon>Pseudomonadota</taxon>
        <taxon>Alphaproteobacteria</taxon>
        <taxon>Rickettsiales</taxon>
        <taxon>Anaplasmataceae</taxon>
        <taxon>Anaplasma</taxon>
    </lineage>
</organism>
<comment type="function">
    <text evidence="2">One of the essential components for the initiation of protein synthesis. Protects formylmethionyl-tRNA from spontaneous hydrolysis and promotes its binding to the 30S ribosomal subunits. Also involved in the hydrolysis of GTP during the formation of the 70S ribosomal complex.</text>
</comment>
<comment type="subcellular location">
    <subcellularLocation>
        <location evidence="2">Cytoplasm</location>
    </subcellularLocation>
</comment>
<comment type="similarity">
    <text evidence="2">Belongs to the TRAFAC class translation factor GTPase superfamily. Classic translation factor GTPase family. IF-2 subfamily.</text>
</comment>